<evidence type="ECO:0000250" key="1"/>
<evidence type="ECO:0000256" key="2">
    <source>
        <dbReference type="SAM" id="MobiDB-lite"/>
    </source>
</evidence>
<evidence type="ECO:0000305" key="3"/>
<gene>
    <name type="primary">ATG29</name>
    <name type="ordered locus">AAL098W</name>
</gene>
<protein>
    <recommendedName>
        <fullName>Autophagy-related protein 29</fullName>
    </recommendedName>
</protein>
<sequence>MNSKNTIVYVKVPGRQREGFVDPPPFEWNQHQDRKLWAHISTIEDKDDIDWQLLSNQTNAPEFFIRKRVYQLFRVHLKSIEQEIYSHTSADRAPNRSSQAGDEPAASVGVLNGYGQNINDIHDLSSLQTPPTCRGKANKDEDGGNSSGISELSSLSVSKSALEEALMDRLQL</sequence>
<organism>
    <name type="scientific">Eremothecium gossypii (strain ATCC 10895 / CBS 109.51 / FGSC 9923 / NRRL Y-1056)</name>
    <name type="common">Yeast</name>
    <name type="synonym">Ashbya gossypii</name>
    <dbReference type="NCBI Taxonomy" id="284811"/>
    <lineage>
        <taxon>Eukaryota</taxon>
        <taxon>Fungi</taxon>
        <taxon>Dikarya</taxon>
        <taxon>Ascomycota</taxon>
        <taxon>Saccharomycotina</taxon>
        <taxon>Saccharomycetes</taxon>
        <taxon>Saccharomycetales</taxon>
        <taxon>Saccharomycetaceae</taxon>
        <taxon>Eremothecium</taxon>
    </lineage>
</organism>
<dbReference type="EMBL" id="AE016814">
    <property type="protein sequence ID" value="AAS50268.1"/>
    <property type="molecule type" value="Genomic_DNA"/>
</dbReference>
<dbReference type="RefSeq" id="NP_982444.1">
    <property type="nucleotide sequence ID" value="NM_207797.1"/>
</dbReference>
<dbReference type="SMR" id="Q75F26"/>
<dbReference type="FunCoup" id="Q75F26">
    <property type="interactions" value="79"/>
</dbReference>
<dbReference type="STRING" id="284811.Q75F26"/>
<dbReference type="EnsemblFungi" id="AAS50268">
    <property type="protein sequence ID" value="AAS50268"/>
    <property type="gene ID" value="AGOS_AAL098W"/>
</dbReference>
<dbReference type="GeneID" id="4618524"/>
<dbReference type="KEGG" id="ago:AGOS_AAL098W"/>
<dbReference type="eggNOG" id="ENOG502S1W0">
    <property type="taxonomic scope" value="Eukaryota"/>
</dbReference>
<dbReference type="HOGENOM" id="CLU_121102_0_0_1"/>
<dbReference type="InParanoid" id="Q75F26"/>
<dbReference type="OrthoDB" id="21072at2759"/>
<dbReference type="Proteomes" id="UP000000591">
    <property type="component" value="Chromosome I"/>
</dbReference>
<dbReference type="GO" id="GO:1990316">
    <property type="term" value="C:Atg1/ULK1 kinase complex"/>
    <property type="evidence" value="ECO:0007669"/>
    <property type="project" value="EnsemblFungi"/>
</dbReference>
<dbReference type="GO" id="GO:0000407">
    <property type="term" value="C:phagophore assembly site"/>
    <property type="evidence" value="ECO:0000318"/>
    <property type="project" value="GO_Central"/>
</dbReference>
<dbReference type="GO" id="GO:0000149">
    <property type="term" value="F:SNARE binding"/>
    <property type="evidence" value="ECO:0007669"/>
    <property type="project" value="EnsemblFungi"/>
</dbReference>
<dbReference type="GO" id="GO:0000422">
    <property type="term" value="P:autophagy of mitochondrion"/>
    <property type="evidence" value="ECO:0007669"/>
    <property type="project" value="EnsemblFungi"/>
</dbReference>
<dbReference type="GO" id="GO:0006995">
    <property type="term" value="P:cellular response to nitrogen starvation"/>
    <property type="evidence" value="ECO:0007669"/>
    <property type="project" value="EnsemblFungi"/>
</dbReference>
<dbReference type="GO" id="GO:0034727">
    <property type="term" value="P:piecemeal microautophagy of the nucleus"/>
    <property type="evidence" value="ECO:0007669"/>
    <property type="project" value="EnsemblFungi"/>
</dbReference>
<dbReference type="GO" id="GO:0034497">
    <property type="term" value="P:protein localization to phagophore assembly site"/>
    <property type="evidence" value="ECO:0007669"/>
    <property type="project" value="EnsemblFungi"/>
</dbReference>
<dbReference type="GO" id="GO:0015031">
    <property type="term" value="P:protein transport"/>
    <property type="evidence" value="ECO:0007669"/>
    <property type="project" value="UniProtKB-KW"/>
</dbReference>
<dbReference type="FunFam" id="1.10.10.2570:FF:000001">
    <property type="entry name" value="Autophagy-related protein 29"/>
    <property type="match status" value="1"/>
</dbReference>
<dbReference type="Gene3D" id="1.10.10.2570">
    <property type="match status" value="1"/>
</dbReference>
<dbReference type="InterPro" id="IPR039113">
    <property type="entry name" value="ATG29"/>
</dbReference>
<dbReference type="InterPro" id="IPR040666">
    <property type="entry name" value="Atg29_N"/>
</dbReference>
<dbReference type="InterPro" id="IPR039362">
    <property type="entry name" value="ATG29_sf"/>
</dbReference>
<dbReference type="PANTHER" id="PTHR40012">
    <property type="entry name" value="AUTOPHAGY-RELATED PROTEIN 29"/>
    <property type="match status" value="1"/>
</dbReference>
<dbReference type="PANTHER" id="PTHR40012:SF1">
    <property type="entry name" value="AUTOPHAGY-RELATED PROTEIN 29"/>
    <property type="match status" value="1"/>
</dbReference>
<dbReference type="Pfam" id="PF18388">
    <property type="entry name" value="ATG29_N"/>
    <property type="match status" value="1"/>
</dbReference>
<feature type="chain" id="PRO_0000232993" description="Autophagy-related protein 29">
    <location>
        <begin position="1"/>
        <end position="172"/>
    </location>
</feature>
<feature type="region of interest" description="Disordered" evidence="2">
    <location>
        <begin position="87"/>
        <end position="158"/>
    </location>
</feature>
<feature type="compositionally biased region" description="Polar residues" evidence="2">
    <location>
        <begin position="114"/>
        <end position="131"/>
    </location>
</feature>
<feature type="compositionally biased region" description="Low complexity" evidence="2">
    <location>
        <begin position="147"/>
        <end position="158"/>
    </location>
</feature>
<proteinExistence type="inferred from homology"/>
<name>ATG29_EREGS</name>
<keyword id="KW-0072">Autophagy</keyword>
<keyword id="KW-0653">Protein transport</keyword>
<keyword id="KW-1185">Reference proteome</keyword>
<keyword id="KW-0813">Transport</keyword>
<reference key="1">
    <citation type="journal article" date="2004" name="Science">
        <title>The Ashbya gossypii genome as a tool for mapping the ancient Saccharomyces cerevisiae genome.</title>
        <authorList>
            <person name="Dietrich F.S."/>
            <person name="Voegeli S."/>
            <person name="Brachat S."/>
            <person name="Lerch A."/>
            <person name="Gates K."/>
            <person name="Steiner S."/>
            <person name="Mohr C."/>
            <person name="Poehlmann R."/>
            <person name="Luedi P."/>
            <person name="Choi S."/>
            <person name="Wing R.A."/>
            <person name="Flavier A."/>
            <person name="Gaffney T.D."/>
            <person name="Philippsen P."/>
        </authorList>
    </citation>
    <scope>NUCLEOTIDE SEQUENCE [LARGE SCALE GENOMIC DNA]</scope>
    <source>
        <strain>ATCC 10895 / CBS 109.51 / FGSC 9923 / NRRL Y-1056</strain>
    </source>
</reference>
<reference key="2">
    <citation type="journal article" date="2013" name="G3 (Bethesda)">
        <title>Genomes of Ashbya fungi isolated from insects reveal four mating-type loci, numerous translocations, lack of transposons, and distinct gene duplications.</title>
        <authorList>
            <person name="Dietrich F.S."/>
            <person name="Voegeli S."/>
            <person name="Kuo S."/>
            <person name="Philippsen P."/>
        </authorList>
    </citation>
    <scope>GENOME REANNOTATION</scope>
    <source>
        <strain>ATCC 10895 / CBS 109.51 / FGSC 9923 / NRRL Y-1056</strain>
    </source>
</reference>
<comment type="function">
    <text evidence="1">Plays a role in autophagy. Functions at the preautophagosomal structure (PAS) in order to form normal autophagosomes under starvation conditions. Also plays a role in mitophagy and regulation of filamentous growth (By similarity).</text>
</comment>
<comment type="subcellular location">
    <subcellularLocation>
        <location evidence="1">Preautophagosomal structure</location>
    </subcellularLocation>
    <text evidence="1">Also localizes to other perivacuolar punctate structures.</text>
</comment>
<comment type="similarity">
    <text evidence="3">Belongs to the ATG29 family.</text>
</comment>
<accession>Q75F26</accession>